<organism>
    <name type="scientific">Aliivibrio fischeri (strain MJ11)</name>
    <name type="common">Vibrio fischeri</name>
    <dbReference type="NCBI Taxonomy" id="388396"/>
    <lineage>
        <taxon>Bacteria</taxon>
        <taxon>Pseudomonadati</taxon>
        <taxon>Pseudomonadota</taxon>
        <taxon>Gammaproteobacteria</taxon>
        <taxon>Vibrionales</taxon>
        <taxon>Vibrionaceae</taxon>
        <taxon>Aliivibrio</taxon>
    </lineage>
</organism>
<proteinExistence type="inferred from homology"/>
<keyword id="KW-0997">Cell inner membrane</keyword>
<keyword id="KW-1003">Cell membrane</keyword>
<keyword id="KW-0472">Membrane</keyword>
<keyword id="KW-0808">Transferase</keyword>
<keyword id="KW-0812">Transmembrane</keyword>
<keyword id="KW-1133">Transmembrane helix</keyword>
<dbReference type="EC" id="2.5.1.145" evidence="1"/>
<dbReference type="EMBL" id="CP001139">
    <property type="protein sequence ID" value="ACH67025.1"/>
    <property type="molecule type" value="Genomic_DNA"/>
</dbReference>
<dbReference type="RefSeq" id="WP_012534141.1">
    <property type="nucleotide sequence ID" value="NC_011184.1"/>
</dbReference>
<dbReference type="SMR" id="B5FA52"/>
<dbReference type="KEGG" id="vfm:VFMJ11_0458"/>
<dbReference type="HOGENOM" id="CLU_013386_1_0_6"/>
<dbReference type="UniPathway" id="UPA00664"/>
<dbReference type="Proteomes" id="UP000001857">
    <property type="component" value="Chromosome I"/>
</dbReference>
<dbReference type="GO" id="GO:0005886">
    <property type="term" value="C:plasma membrane"/>
    <property type="evidence" value="ECO:0007669"/>
    <property type="project" value="UniProtKB-SubCell"/>
</dbReference>
<dbReference type="GO" id="GO:0008961">
    <property type="term" value="F:phosphatidylglycerol-prolipoprotein diacylglyceryl transferase activity"/>
    <property type="evidence" value="ECO:0007669"/>
    <property type="project" value="UniProtKB-UniRule"/>
</dbReference>
<dbReference type="GO" id="GO:0042158">
    <property type="term" value="P:lipoprotein biosynthetic process"/>
    <property type="evidence" value="ECO:0007669"/>
    <property type="project" value="UniProtKB-UniRule"/>
</dbReference>
<dbReference type="HAMAP" id="MF_01147">
    <property type="entry name" value="Lgt"/>
    <property type="match status" value="1"/>
</dbReference>
<dbReference type="InterPro" id="IPR001640">
    <property type="entry name" value="Lgt"/>
</dbReference>
<dbReference type="NCBIfam" id="TIGR00544">
    <property type="entry name" value="lgt"/>
    <property type="match status" value="1"/>
</dbReference>
<dbReference type="PANTHER" id="PTHR30589:SF0">
    <property type="entry name" value="PHOSPHATIDYLGLYCEROL--PROLIPOPROTEIN DIACYLGLYCERYL TRANSFERASE"/>
    <property type="match status" value="1"/>
</dbReference>
<dbReference type="PANTHER" id="PTHR30589">
    <property type="entry name" value="PROLIPOPROTEIN DIACYLGLYCERYL TRANSFERASE"/>
    <property type="match status" value="1"/>
</dbReference>
<dbReference type="Pfam" id="PF01790">
    <property type="entry name" value="LGT"/>
    <property type="match status" value="1"/>
</dbReference>
<dbReference type="PROSITE" id="PS01311">
    <property type="entry name" value="LGT"/>
    <property type="match status" value="1"/>
</dbReference>
<sequence length="283" mass="32034">MSQGYLNFPHIDPVLIEIGPLAVRWYGLMYLFGFMFALWLANKRADKPNSGWTRDQVSDLLFAGFLGVVIGGRVGYVLFYNFGYFLDNPLYLFEVWTGGMSFHGGLLGVISAMLWYGYKNNRSFFTIADFVAPLVPFGLGAGRLGNFMNGELWGRVTDVPWAMVFPTGGPFPRHPSQLYEFALEGVVLFFILNWFIRKPRPLGAVSGLFLFGYGTFRFLVEYVRQPDAQLGLFGDWISMGQILSLPMVIGGLLMMLWAFKRNLFATDVEQNKTKSKKSKQKAK</sequence>
<comment type="function">
    <text evidence="1">Catalyzes the transfer of the diacylglyceryl group from phosphatidylglycerol to the sulfhydryl group of the N-terminal cysteine of a prolipoprotein, the first step in the formation of mature lipoproteins.</text>
</comment>
<comment type="catalytic activity">
    <reaction evidence="1">
        <text>L-cysteinyl-[prolipoprotein] + a 1,2-diacyl-sn-glycero-3-phospho-(1'-sn-glycerol) = an S-1,2-diacyl-sn-glyceryl-L-cysteinyl-[prolipoprotein] + sn-glycerol 1-phosphate + H(+)</text>
        <dbReference type="Rhea" id="RHEA:56712"/>
        <dbReference type="Rhea" id="RHEA-COMP:14679"/>
        <dbReference type="Rhea" id="RHEA-COMP:14680"/>
        <dbReference type="ChEBI" id="CHEBI:15378"/>
        <dbReference type="ChEBI" id="CHEBI:29950"/>
        <dbReference type="ChEBI" id="CHEBI:57685"/>
        <dbReference type="ChEBI" id="CHEBI:64716"/>
        <dbReference type="ChEBI" id="CHEBI:140658"/>
        <dbReference type="EC" id="2.5.1.145"/>
    </reaction>
</comment>
<comment type="pathway">
    <text evidence="1">Protein modification; lipoprotein biosynthesis (diacylglyceryl transfer).</text>
</comment>
<comment type="subcellular location">
    <subcellularLocation>
        <location evidence="1">Cell inner membrane</location>
        <topology evidence="1">Multi-pass membrane protein</topology>
    </subcellularLocation>
</comment>
<comment type="similarity">
    <text evidence="1">Belongs to the Lgt family.</text>
</comment>
<feature type="chain" id="PRO_1000137470" description="Phosphatidylglycerol--prolipoprotein diacylglyceryl transferase">
    <location>
        <begin position="1"/>
        <end position="283"/>
    </location>
</feature>
<feature type="transmembrane region" description="Helical" evidence="1">
    <location>
        <begin position="21"/>
        <end position="41"/>
    </location>
</feature>
<feature type="transmembrane region" description="Helical" evidence="1">
    <location>
        <begin position="60"/>
        <end position="80"/>
    </location>
</feature>
<feature type="transmembrane region" description="Helical" evidence="1">
    <location>
        <begin position="95"/>
        <end position="115"/>
    </location>
</feature>
<feature type="transmembrane region" description="Helical" evidence="1">
    <location>
        <begin position="124"/>
        <end position="144"/>
    </location>
</feature>
<feature type="transmembrane region" description="Helical" evidence="1">
    <location>
        <begin position="176"/>
        <end position="196"/>
    </location>
</feature>
<feature type="transmembrane region" description="Helical" evidence="1">
    <location>
        <begin position="203"/>
        <end position="223"/>
    </location>
</feature>
<feature type="transmembrane region" description="Helical" evidence="1">
    <location>
        <begin position="239"/>
        <end position="259"/>
    </location>
</feature>
<feature type="binding site" evidence="1">
    <location>
        <position position="143"/>
    </location>
    <ligand>
        <name>a 1,2-diacyl-sn-glycero-3-phospho-(1'-sn-glycerol)</name>
        <dbReference type="ChEBI" id="CHEBI:64716"/>
    </ligand>
</feature>
<evidence type="ECO:0000255" key="1">
    <source>
        <dbReference type="HAMAP-Rule" id="MF_01147"/>
    </source>
</evidence>
<gene>
    <name evidence="1" type="primary">lgt</name>
    <name type="ordered locus">VFMJ11_0458</name>
</gene>
<reference key="1">
    <citation type="submission" date="2008-08" db="EMBL/GenBank/DDBJ databases">
        <title>Complete sequence of Vibrio fischeri strain MJ11.</title>
        <authorList>
            <person name="Mandel M.J."/>
            <person name="Stabb E.V."/>
            <person name="Ruby E.G."/>
            <person name="Ferriera S."/>
            <person name="Johnson J."/>
            <person name="Kravitz S."/>
            <person name="Beeson K."/>
            <person name="Sutton G."/>
            <person name="Rogers Y.-H."/>
            <person name="Friedman R."/>
            <person name="Frazier M."/>
            <person name="Venter J.C."/>
        </authorList>
    </citation>
    <scope>NUCLEOTIDE SEQUENCE [LARGE SCALE GENOMIC DNA]</scope>
    <source>
        <strain>MJ11</strain>
    </source>
</reference>
<name>LGT_ALIFM</name>
<protein>
    <recommendedName>
        <fullName evidence="1">Phosphatidylglycerol--prolipoprotein diacylglyceryl transferase</fullName>
        <ecNumber evidence="1">2.5.1.145</ecNumber>
    </recommendedName>
</protein>
<accession>B5FA52</accession>